<keyword id="KW-0687">Ribonucleoprotein</keyword>
<keyword id="KW-0689">Ribosomal protein</keyword>
<keyword id="KW-0694">RNA-binding</keyword>
<keyword id="KW-0699">rRNA-binding</keyword>
<name>RL2_TROW8</name>
<protein>
    <recommendedName>
        <fullName evidence="1">Large ribosomal subunit protein uL2</fullName>
    </recommendedName>
    <alternativeName>
        <fullName evidence="3">50S ribosomal protein L2</fullName>
    </alternativeName>
</protein>
<feature type="chain" id="PRO_0000129644" description="Large ribosomal subunit protein uL2">
    <location>
        <begin position="1"/>
        <end position="277"/>
    </location>
</feature>
<feature type="region of interest" description="Disordered" evidence="2">
    <location>
        <begin position="225"/>
        <end position="277"/>
    </location>
</feature>
<feature type="compositionally biased region" description="Basic and acidic residues" evidence="2">
    <location>
        <begin position="253"/>
        <end position="268"/>
    </location>
</feature>
<gene>
    <name evidence="1" type="primary">rplB</name>
    <name type="ordered locus">TW210</name>
</gene>
<evidence type="ECO:0000255" key="1">
    <source>
        <dbReference type="HAMAP-Rule" id="MF_01320"/>
    </source>
</evidence>
<evidence type="ECO:0000256" key="2">
    <source>
        <dbReference type="SAM" id="MobiDB-lite"/>
    </source>
</evidence>
<evidence type="ECO:0000305" key="3"/>
<proteinExistence type="inferred from homology"/>
<organism>
    <name type="scientific">Tropheryma whipplei (strain TW08/27)</name>
    <name type="common">Whipple's bacillus</name>
    <dbReference type="NCBI Taxonomy" id="218496"/>
    <lineage>
        <taxon>Bacteria</taxon>
        <taxon>Bacillati</taxon>
        <taxon>Actinomycetota</taxon>
        <taxon>Actinomycetes</taxon>
        <taxon>Micrococcales</taxon>
        <taxon>Tropherymataceae</taxon>
        <taxon>Tropheryma</taxon>
    </lineage>
</organism>
<reference key="1">
    <citation type="journal article" date="2003" name="Lancet">
        <title>Sequencing and analysis of the genome of the Whipple's disease bacterium Tropheryma whipplei.</title>
        <authorList>
            <person name="Bentley S.D."/>
            <person name="Maiwald M."/>
            <person name="Murphy L.D."/>
            <person name="Pallen M.J."/>
            <person name="Yeats C.A."/>
            <person name="Dover L.G."/>
            <person name="Norbertczak H.T."/>
            <person name="Besra G.S."/>
            <person name="Quail M.A."/>
            <person name="Harris D.E."/>
            <person name="von Herbay A."/>
            <person name="Goble A."/>
            <person name="Rutter S."/>
            <person name="Squares R."/>
            <person name="Squares S."/>
            <person name="Barrell B.G."/>
            <person name="Parkhill J."/>
            <person name="Relman D.A."/>
        </authorList>
    </citation>
    <scope>NUCLEOTIDE SEQUENCE [LARGE SCALE GENOMIC DNA]</scope>
    <source>
        <strain>TW08/27</strain>
    </source>
</reference>
<sequence>MAVRKSNPLTPARRGMSFSDFAEITRATPHKSLLSKLSKTGGRNNHGRITARHIGGGHKRRYRLVDFRRSDKDGVKAKVAHIEYDPNRTARIALLHFLDGAKRYILAPSGLKQGDVVESGSSADIRPGNSLCIRDIPVGTILHAVELRPGQGAKLARSAGSSVRLSAKDGDFAILKLPSGEIRMVSLSCRATIGEVGNGQRLNVSLGKAGRSRWCGVRPSVRGVAMNPVDHPHGGGEGKTSGGRHPVSPWGRPEGKTRRANKPSDRFIIRRKSRKRR</sequence>
<comment type="function">
    <text evidence="1">One of the primary rRNA binding proteins. Required for association of the 30S and 50S subunits to form the 70S ribosome, for tRNA binding and peptide bond formation. It has been suggested to have peptidyltransferase activity; this is somewhat controversial. Makes several contacts with the 16S rRNA in the 70S ribosome.</text>
</comment>
<comment type="subunit">
    <text evidence="1">Part of the 50S ribosomal subunit. Forms a bridge to the 30S subunit in the 70S ribosome.</text>
</comment>
<comment type="similarity">
    <text evidence="1">Belongs to the universal ribosomal protein uL2 family.</text>
</comment>
<accession>Q83I75</accession>
<dbReference type="EMBL" id="BX251410">
    <property type="protein sequence ID" value="CAD66887.1"/>
    <property type="molecule type" value="Genomic_DNA"/>
</dbReference>
<dbReference type="RefSeq" id="WP_011096168.1">
    <property type="nucleotide sequence ID" value="NC_004551.1"/>
</dbReference>
<dbReference type="SMR" id="Q83I75"/>
<dbReference type="GeneID" id="67387986"/>
<dbReference type="KEGG" id="tws:TW210"/>
<dbReference type="HOGENOM" id="CLU_036235_2_1_11"/>
<dbReference type="GO" id="GO:0015934">
    <property type="term" value="C:large ribosomal subunit"/>
    <property type="evidence" value="ECO:0007669"/>
    <property type="project" value="InterPro"/>
</dbReference>
<dbReference type="GO" id="GO:0019843">
    <property type="term" value="F:rRNA binding"/>
    <property type="evidence" value="ECO:0007669"/>
    <property type="project" value="UniProtKB-UniRule"/>
</dbReference>
<dbReference type="GO" id="GO:0003735">
    <property type="term" value="F:structural constituent of ribosome"/>
    <property type="evidence" value="ECO:0007669"/>
    <property type="project" value="InterPro"/>
</dbReference>
<dbReference type="GO" id="GO:0016740">
    <property type="term" value="F:transferase activity"/>
    <property type="evidence" value="ECO:0007669"/>
    <property type="project" value="InterPro"/>
</dbReference>
<dbReference type="GO" id="GO:0002181">
    <property type="term" value="P:cytoplasmic translation"/>
    <property type="evidence" value="ECO:0007669"/>
    <property type="project" value="TreeGrafter"/>
</dbReference>
<dbReference type="FunFam" id="2.30.30.30:FF:000001">
    <property type="entry name" value="50S ribosomal protein L2"/>
    <property type="match status" value="1"/>
</dbReference>
<dbReference type="FunFam" id="2.40.50.140:FF:000003">
    <property type="entry name" value="50S ribosomal protein L2"/>
    <property type="match status" value="1"/>
</dbReference>
<dbReference type="FunFam" id="4.10.950.10:FF:000001">
    <property type="entry name" value="50S ribosomal protein L2"/>
    <property type="match status" value="1"/>
</dbReference>
<dbReference type="Gene3D" id="2.30.30.30">
    <property type="match status" value="1"/>
</dbReference>
<dbReference type="Gene3D" id="2.40.50.140">
    <property type="entry name" value="Nucleic acid-binding proteins"/>
    <property type="match status" value="1"/>
</dbReference>
<dbReference type="Gene3D" id="4.10.950.10">
    <property type="entry name" value="Ribosomal protein L2, domain 3"/>
    <property type="match status" value="1"/>
</dbReference>
<dbReference type="HAMAP" id="MF_01320_B">
    <property type="entry name" value="Ribosomal_uL2_B"/>
    <property type="match status" value="1"/>
</dbReference>
<dbReference type="InterPro" id="IPR012340">
    <property type="entry name" value="NA-bd_OB-fold"/>
</dbReference>
<dbReference type="InterPro" id="IPR014722">
    <property type="entry name" value="Rib_uL2_dom2"/>
</dbReference>
<dbReference type="InterPro" id="IPR002171">
    <property type="entry name" value="Ribosomal_uL2"/>
</dbReference>
<dbReference type="InterPro" id="IPR005880">
    <property type="entry name" value="Ribosomal_uL2_bac/org-type"/>
</dbReference>
<dbReference type="InterPro" id="IPR022669">
    <property type="entry name" value="Ribosomal_uL2_C"/>
</dbReference>
<dbReference type="InterPro" id="IPR022671">
    <property type="entry name" value="Ribosomal_uL2_CS"/>
</dbReference>
<dbReference type="InterPro" id="IPR014726">
    <property type="entry name" value="Ribosomal_uL2_dom3"/>
</dbReference>
<dbReference type="InterPro" id="IPR022666">
    <property type="entry name" value="Ribosomal_uL2_RNA-bd_dom"/>
</dbReference>
<dbReference type="InterPro" id="IPR008991">
    <property type="entry name" value="Translation_prot_SH3-like_sf"/>
</dbReference>
<dbReference type="NCBIfam" id="TIGR01171">
    <property type="entry name" value="rplB_bact"/>
    <property type="match status" value="1"/>
</dbReference>
<dbReference type="PANTHER" id="PTHR13691:SF5">
    <property type="entry name" value="LARGE RIBOSOMAL SUBUNIT PROTEIN UL2M"/>
    <property type="match status" value="1"/>
</dbReference>
<dbReference type="PANTHER" id="PTHR13691">
    <property type="entry name" value="RIBOSOMAL PROTEIN L2"/>
    <property type="match status" value="1"/>
</dbReference>
<dbReference type="Pfam" id="PF00181">
    <property type="entry name" value="Ribosomal_L2"/>
    <property type="match status" value="1"/>
</dbReference>
<dbReference type="Pfam" id="PF03947">
    <property type="entry name" value="Ribosomal_L2_C"/>
    <property type="match status" value="1"/>
</dbReference>
<dbReference type="PIRSF" id="PIRSF002158">
    <property type="entry name" value="Ribosomal_L2"/>
    <property type="match status" value="1"/>
</dbReference>
<dbReference type="SMART" id="SM01383">
    <property type="entry name" value="Ribosomal_L2"/>
    <property type="match status" value="1"/>
</dbReference>
<dbReference type="SMART" id="SM01382">
    <property type="entry name" value="Ribosomal_L2_C"/>
    <property type="match status" value="1"/>
</dbReference>
<dbReference type="SUPFAM" id="SSF50249">
    <property type="entry name" value="Nucleic acid-binding proteins"/>
    <property type="match status" value="1"/>
</dbReference>
<dbReference type="SUPFAM" id="SSF50104">
    <property type="entry name" value="Translation proteins SH3-like domain"/>
    <property type="match status" value="1"/>
</dbReference>
<dbReference type="PROSITE" id="PS00467">
    <property type="entry name" value="RIBOSOMAL_L2"/>
    <property type="match status" value="1"/>
</dbReference>